<protein>
    <recommendedName>
        <fullName evidence="1">Tryptophan synthase alpha chain</fullName>
        <ecNumber evidence="1">4.2.1.20</ecNumber>
    </recommendedName>
</protein>
<evidence type="ECO:0000255" key="1">
    <source>
        <dbReference type="HAMAP-Rule" id="MF_00131"/>
    </source>
</evidence>
<proteinExistence type="inferred from homology"/>
<dbReference type="EC" id="4.2.1.20" evidence="1"/>
<dbReference type="EMBL" id="CP000393">
    <property type="protein sequence ID" value="ABG53479.1"/>
    <property type="molecule type" value="Genomic_DNA"/>
</dbReference>
<dbReference type="RefSeq" id="WP_011613801.1">
    <property type="nucleotide sequence ID" value="NC_008312.1"/>
</dbReference>
<dbReference type="SMR" id="Q10W95"/>
<dbReference type="STRING" id="203124.Tery_4493"/>
<dbReference type="KEGG" id="ter:Tery_4493"/>
<dbReference type="eggNOG" id="COG0159">
    <property type="taxonomic scope" value="Bacteria"/>
</dbReference>
<dbReference type="HOGENOM" id="CLU_016734_0_2_3"/>
<dbReference type="OrthoDB" id="9804578at2"/>
<dbReference type="UniPathway" id="UPA00035">
    <property type="reaction ID" value="UER00044"/>
</dbReference>
<dbReference type="GO" id="GO:0005829">
    <property type="term" value="C:cytosol"/>
    <property type="evidence" value="ECO:0007669"/>
    <property type="project" value="TreeGrafter"/>
</dbReference>
<dbReference type="GO" id="GO:0004834">
    <property type="term" value="F:tryptophan synthase activity"/>
    <property type="evidence" value="ECO:0007669"/>
    <property type="project" value="UniProtKB-UniRule"/>
</dbReference>
<dbReference type="CDD" id="cd04724">
    <property type="entry name" value="Tryptophan_synthase_alpha"/>
    <property type="match status" value="1"/>
</dbReference>
<dbReference type="FunFam" id="3.20.20.70:FF:000107">
    <property type="entry name" value="Tryptophan synthase alpha chain, chloroplastic"/>
    <property type="match status" value="1"/>
</dbReference>
<dbReference type="Gene3D" id="3.20.20.70">
    <property type="entry name" value="Aldolase class I"/>
    <property type="match status" value="1"/>
</dbReference>
<dbReference type="HAMAP" id="MF_00131">
    <property type="entry name" value="Trp_synth_alpha"/>
    <property type="match status" value="1"/>
</dbReference>
<dbReference type="InterPro" id="IPR013785">
    <property type="entry name" value="Aldolase_TIM"/>
</dbReference>
<dbReference type="InterPro" id="IPR011060">
    <property type="entry name" value="RibuloseP-bd_barrel"/>
</dbReference>
<dbReference type="InterPro" id="IPR018204">
    <property type="entry name" value="Trp_synthase_alpha_AS"/>
</dbReference>
<dbReference type="InterPro" id="IPR002028">
    <property type="entry name" value="Trp_synthase_suA"/>
</dbReference>
<dbReference type="NCBIfam" id="TIGR00262">
    <property type="entry name" value="trpA"/>
    <property type="match status" value="1"/>
</dbReference>
<dbReference type="PANTHER" id="PTHR43406:SF1">
    <property type="entry name" value="TRYPTOPHAN SYNTHASE ALPHA CHAIN, CHLOROPLASTIC"/>
    <property type="match status" value="1"/>
</dbReference>
<dbReference type="PANTHER" id="PTHR43406">
    <property type="entry name" value="TRYPTOPHAN SYNTHASE, ALPHA CHAIN"/>
    <property type="match status" value="1"/>
</dbReference>
<dbReference type="Pfam" id="PF00290">
    <property type="entry name" value="Trp_syntA"/>
    <property type="match status" value="1"/>
</dbReference>
<dbReference type="SUPFAM" id="SSF51366">
    <property type="entry name" value="Ribulose-phoshate binding barrel"/>
    <property type="match status" value="1"/>
</dbReference>
<dbReference type="PROSITE" id="PS00167">
    <property type="entry name" value="TRP_SYNTHASE_ALPHA"/>
    <property type="match status" value="1"/>
</dbReference>
<name>TRPA_TRIEI</name>
<accession>Q10W95</accession>
<reference key="1">
    <citation type="journal article" date="2015" name="Proc. Natl. Acad. Sci. U.S.A.">
        <title>Trichodesmium genome maintains abundant, widespread noncoding DNA in situ, despite oligotrophic lifestyle.</title>
        <authorList>
            <person name="Walworth N."/>
            <person name="Pfreundt U."/>
            <person name="Nelson W.C."/>
            <person name="Mincer T."/>
            <person name="Heidelberg J.F."/>
            <person name="Fu F."/>
            <person name="Waterbury J.B."/>
            <person name="Glavina del Rio T."/>
            <person name="Goodwin L."/>
            <person name="Kyrpides N.C."/>
            <person name="Land M.L."/>
            <person name="Woyke T."/>
            <person name="Hutchins D.A."/>
            <person name="Hess W.R."/>
            <person name="Webb E.A."/>
        </authorList>
    </citation>
    <scope>NUCLEOTIDE SEQUENCE [LARGE SCALE GENOMIC DNA]</scope>
    <source>
        <strain>IMS101</strain>
    </source>
</reference>
<feature type="chain" id="PRO_1000018304" description="Tryptophan synthase alpha chain">
    <location>
        <begin position="1"/>
        <end position="265"/>
    </location>
</feature>
<feature type="active site" description="Proton acceptor" evidence="1">
    <location>
        <position position="50"/>
    </location>
</feature>
<feature type="active site" description="Proton acceptor" evidence="1">
    <location>
        <position position="61"/>
    </location>
</feature>
<keyword id="KW-0028">Amino-acid biosynthesis</keyword>
<keyword id="KW-0057">Aromatic amino acid biosynthesis</keyword>
<keyword id="KW-0456">Lyase</keyword>
<keyword id="KW-0822">Tryptophan biosynthesis</keyword>
<organism>
    <name type="scientific">Trichodesmium erythraeum (strain IMS101)</name>
    <dbReference type="NCBI Taxonomy" id="203124"/>
    <lineage>
        <taxon>Bacteria</taxon>
        <taxon>Bacillati</taxon>
        <taxon>Cyanobacteriota</taxon>
        <taxon>Cyanophyceae</taxon>
        <taxon>Oscillatoriophycideae</taxon>
        <taxon>Oscillatoriales</taxon>
        <taxon>Microcoleaceae</taxon>
        <taxon>Trichodesmium</taxon>
    </lineage>
</organism>
<comment type="function">
    <text evidence="1">The alpha subunit is responsible for the aldol cleavage of indoleglycerol phosphate to indole and glyceraldehyde 3-phosphate.</text>
</comment>
<comment type="catalytic activity">
    <reaction evidence="1">
        <text>(1S,2R)-1-C-(indol-3-yl)glycerol 3-phosphate + L-serine = D-glyceraldehyde 3-phosphate + L-tryptophan + H2O</text>
        <dbReference type="Rhea" id="RHEA:10532"/>
        <dbReference type="ChEBI" id="CHEBI:15377"/>
        <dbReference type="ChEBI" id="CHEBI:33384"/>
        <dbReference type="ChEBI" id="CHEBI:57912"/>
        <dbReference type="ChEBI" id="CHEBI:58866"/>
        <dbReference type="ChEBI" id="CHEBI:59776"/>
        <dbReference type="EC" id="4.2.1.20"/>
    </reaction>
</comment>
<comment type="pathway">
    <text evidence="1">Amino-acid biosynthesis; L-tryptophan biosynthesis; L-tryptophan from chorismate: step 5/5.</text>
</comment>
<comment type="subunit">
    <text evidence="1">Tetramer of two alpha and two beta chains.</text>
</comment>
<comment type="similarity">
    <text evidence="1">Belongs to the TrpA family.</text>
</comment>
<gene>
    <name evidence="1" type="primary">trpA</name>
    <name type="ordered locus">Tery_4493</name>
</gene>
<sequence>MISVSDCFESLRNNSSQCALIPFITAGDPDLETTAKALEVLDRSGANMIELGVPYSDPLADGPVIQAAATRSLNRGTTLESVLEVVQTVSPKLRSPIILFTYYNPILYRGVENFLKKIYDVGARGLVVPDLPLEEADILLEPAKDIGIELTLLVAPTSPKERIKAIAHQSQGFIYLVSVTGVTGMRAQMQTRVEDLLAQMREVTDKPIGVGFGISQPEQALQVKKWGSDAVIVGSAVVKRLAEGSPDEGLKAIGEFCQNLKAAIN</sequence>